<accession>P81909</accession>
<accession>B7VC05</accession>
<accession>B7VC07</accession>
<accession>B7VC09</accession>
<accession>B7VC11</accession>
<accession>B7VC21</accession>
<accession>B7VC27</accession>
<accession>B7VC29</accession>
<accession>B7VC75</accession>
<accession>B7VC77</accession>
<accession>B7VCA5</accession>
<accession>Q9U6X7</accession>
<comment type="function">
    <text evidence="6 7 8 9 10 11 12 14 16">Odorant receptor which mediates acceptance or avoidance behavior, depending on its substrates. The odorant receptor repertoire encodes a large collection of odor stimuli that vary widely in identity, intensity, and duration. Involved in the behavioral responses ethyl butyrate and to esters in more general. Complexes with Orco to form odorant-sensing units, providing sensitive and prolonged odorant signaling and calcium permeability. They are necessary and sufficient to promote functional reconstitution of odor-evoked signaling in sensory neurons that normally respond only to carbon dioxide.</text>
</comment>
<comment type="subunit">
    <text evidence="7 8 12 15">Interacts with Orco, via conserved C-terminal cytoplasmic loops. Complexes exist early in the endomembrane system in olfactory sensory neurons (OSNs), coupling these complexes to the conserved ciliary trafficking pathway. Interacts with snmp1.</text>
</comment>
<comment type="subcellular location">
    <subcellularLocation>
        <location evidence="15">Cell membrane</location>
        <topology evidence="15">Multi-pass membrane protein</topology>
    </subcellularLocation>
</comment>
<comment type="tissue specificity">
    <text evidence="2 3 4 5 6 7 8">Expressed with Orco in 17-20 sensory neurons on the medial-proximal edge of the antenna. Expressed in the ab3A neuron which responds to ethyl butyrate.</text>
</comment>
<comment type="miscellaneous">
    <text>The atypical heteromeric and topological design of the odorant receptors appears to be an insect-specific solution for odor recognition, making the OR/Orco complex an attractive target for the development of highly selective insect repellents to disrupt olfactory-mediated host-seeking behaviors of insect disease vectors. Odor-evoked OR currents are independent of known G-protein-coupled second messenger pathways.</text>
</comment>
<comment type="similarity">
    <text evidence="17">Belongs to the insect chemoreceptor superfamily. Heteromeric odorant receptor channel (TC 1.A.69) family. Or2a subfamily.</text>
</comment>
<proteinExistence type="evidence at protein level"/>
<feature type="chain" id="PRO_0000174232" description="Odorant receptor 22a">
    <location>
        <begin position="1"/>
        <end position="397"/>
    </location>
</feature>
<feature type="topological domain" description="Cytoplasmic" evidence="1">
    <location>
        <begin position="1"/>
        <end position="49"/>
    </location>
</feature>
<feature type="transmembrane region" description="Helical; Name=1" evidence="1">
    <location>
        <begin position="50"/>
        <end position="70"/>
    </location>
</feature>
<feature type="topological domain" description="Extracellular" evidence="1">
    <location>
        <begin position="71"/>
        <end position="86"/>
    </location>
</feature>
<feature type="transmembrane region" description="Helical; Name=2" evidence="1">
    <location>
        <begin position="87"/>
        <end position="107"/>
    </location>
</feature>
<feature type="topological domain" description="Cytoplasmic" evidence="1">
    <location>
        <begin position="108"/>
        <end position="136"/>
    </location>
</feature>
<feature type="transmembrane region" description="Helical; Name=3" evidence="1">
    <location>
        <begin position="137"/>
        <end position="157"/>
    </location>
</feature>
<feature type="topological domain" description="Extracellular" evidence="1">
    <location>
        <begin position="158"/>
        <end position="182"/>
    </location>
</feature>
<feature type="transmembrane region" description="Helical; Name=4" evidence="1">
    <location>
        <begin position="183"/>
        <end position="203"/>
    </location>
</feature>
<feature type="topological domain" description="Cytoplasmic" evidence="1">
    <location>
        <begin position="204"/>
        <end position="263"/>
    </location>
</feature>
<feature type="transmembrane region" description="Helical; Name=5" evidence="1">
    <location>
        <begin position="264"/>
        <end position="280"/>
    </location>
</feature>
<feature type="topological domain" description="Extracellular" evidence="1">
    <location>
        <begin position="281"/>
        <end position="286"/>
    </location>
</feature>
<feature type="transmembrane region" description="Helical; Name=6" evidence="1">
    <location>
        <begin position="287"/>
        <end position="304"/>
    </location>
</feature>
<feature type="topological domain" description="Cytoplasmic" evidence="1">
    <location>
        <begin position="305"/>
        <end position="356"/>
    </location>
</feature>
<feature type="transmembrane region" description="Helical; Name=7" evidence="1">
    <location>
        <begin position="357"/>
        <end position="377"/>
    </location>
</feature>
<feature type="topological domain" description="Extracellular" evidence="1">
    <location>
        <begin position="378"/>
        <end position="397"/>
    </location>
</feature>
<feature type="sequence variant" description="In strain: MA74." evidence="13">
    <original>H</original>
    <variation>Y</variation>
    <location>
        <position position="8"/>
    </location>
</feature>
<feature type="sequence variant" description="In strain: NC1b." evidence="13">
    <original>M</original>
    <variation>I</variation>
    <location>
        <position position="59"/>
    </location>
</feature>
<feature type="sequence variant" description="In strain: MA43 and MA74." evidence="13">
    <original>I</original>
    <variation>M</variation>
    <location>
        <position position="67"/>
    </location>
</feature>
<feature type="sequence variant" description="In strain: NC1b and NC97a." evidence="13">
    <original>M</original>
    <variation>V</variation>
    <location>
        <position position="93"/>
    </location>
</feature>
<feature type="sequence variant" description="In strain: CN1, CN13, CN18, CN21, CN29, CN45, CN51, LA128, LA13, LA15, LA25, LA3, LA32, LA34, LA35, LA4, MA21, MA24, NC1b, NC100b, NC37a, NC84a, NC89a and NC97a." evidence="13">
    <original>C</original>
    <variation>S</variation>
    <location>
        <position position="100"/>
    </location>
</feature>
<feature type="sequence variant" description="In strain: NC97a." evidence="13">
    <original>F</original>
    <variation>L</variation>
    <location>
        <position position="102"/>
    </location>
</feature>
<feature type="sequence variant" description="In strain: CN1, CN13, CN18, CN21, CN28, CN29, CN45, CN51, LA120, LA128, LA13, LA15, LA25, LA3, LA32, LA34, LA35, LA4, LA6, LA9, MA21, MA24, NC1b, NC100b, NC16a, NC37a, NC84a, NC89a and NC97a." evidence="13">
    <original>E</original>
    <variation>A</variation>
    <location>
        <position position="196"/>
    </location>
</feature>
<feature type="sequence variant" description="In strain: NC1b and NC97a." evidence="13">
    <original>D</original>
    <variation>E</variation>
    <location>
        <position position="201"/>
    </location>
</feature>
<feature type="sequence variant" description="In strain: CN14." evidence="13">
    <original>S</original>
    <variation>N</variation>
    <location>
        <position position="220"/>
    </location>
</feature>
<feature type="sequence variant" description="In strain: CN13." evidence="13">
    <original>T</original>
    <variation>S</variation>
    <location>
        <position position="292"/>
    </location>
</feature>
<feature type="sequence variant" description="In strain: LA6." evidence="13">
    <original>S</original>
    <variation>A</variation>
    <location>
        <position position="328"/>
    </location>
</feature>
<feature type="sequence variant" description="In strain: LA6." evidence="13">
    <original>N</original>
    <variation>D</variation>
    <location>
        <position position="329"/>
    </location>
</feature>
<feature type="sequence variant" description="In strain: LA6." evidence="13">
    <original>C</original>
    <variation>S</variation>
    <location>
        <position position="330"/>
    </location>
</feature>
<feature type="sequence variant" description="In strain: LA6." evidence="13">
    <original>T</original>
    <variation>I</variation>
    <location>
        <position position="359"/>
    </location>
</feature>
<feature type="sequence variant" description="In strain: LA6." evidence="13">
    <original>A</original>
    <variation>N</variation>
    <location>
        <position position="375"/>
    </location>
</feature>
<feature type="sequence variant" description="In strain: LA6." evidence="13">
    <original>S</original>
    <variation>T</variation>
    <location>
        <position position="382"/>
    </location>
</feature>
<feature type="sequence variant" description="In strain: NC1b and NC97a." evidence="13">
    <original>T</original>
    <variation>A</variation>
    <location>
        <position position="385"/>
    </location>
</feature>
<feature type="sequence variant" description="In strain: LA6." evidence="13">
    <original>V</original>
    <variation>I</variation>
    <location>
        <position position="386"/>
    </location>
</feature>
<feature type="sequence variant" description="In strain: LA6." evidence="13">
    <original>I</original>
    <variation>V</variation>
    <location>
        <position position="387"/>
    </location>
</feature>
<feature type="sequence variant" description="In strain: LA6." evidence="13">
    <original>R</original>
    <variation>K</variation>
    <location>
        <position position="395"/>
    </location>
</feature>
<feature type="sequence conflict" description="In Ref. 1." evidence="17" ref="1">
    <original>D</original>
    <variation>SIPFLFINGLFLFLS</variation>
    <location>
        <position position="256"/>
    </location>
</feature>
<feature type="sequence conflict" description="In Ref. 1." evidence="17" ref="1">
    <original>MVKLAFSVVTVIKQFNLAERFQ</original>
    <variation>VGVNILDISLILHLF</variation>
    <location>
        <begin position="376"/>
        <end position="397"/>
    </location>
</feature>
<gene>
    <name type="primary">Or22a</name>
    <name type="synonym">AN11</name>
    <name type="synonym">DOR22A.1</name>
    <name type="synonym">dor53</name>
    <name type="synonym">Or22A.1</name>
    <name type="ORF">CG12193</name>
</gene>
<reference key="1">
    <citation type="journal article" date="1999" name="Genomics">
        <title>Identification of candidate Drosophila olfactory receptors from genomic DNA sequence.</title>
        <authorList>
            <person name="Gao Q."/>
            <person name="Chess A."/>
        </authorList>
    </citation>
    <scope>NUCLEOTIDE SEQUENCE [GENOMIC DNA]</scope>
    <scope>TISSUE SPECIFICITY</scope>
    <source>
        <strain>Berkeley</strain>
    </source>
</reference>
<reference key="2">
    <citation type="journal article" date="2009" name="Mol. Biol. Evol.">
        <title>Nucleotide and copy-number polymorphism at the odorant receptor genes Or22a and Or22b in Drosophila melanogaster.</title>
        <authorList>
            <person name="Aguade M."/>
        </authorList>
    </citation>
    <scope>NUCLEOTIDE SEQUENCE [GENOMIC DNA]</scope>
    <scope>VARIANTS TYR-8; ILE-59; MET-67; VAL-93; SER-100; LEU-102; ALA-196; GLU-201; ASN-220; SER-292; ALA-328; ASP-329; SER-330; ILE-359; ASN-375; THR-382; ALA-385; ILE-386; VAL-387 AND LYS-395</scope>
    <source>
        <strain>CN1</strain>
        <strain>CN13</strain>
        <strain>CN14</strain>
        <strain>CN18</strain>
        <strain>CN21</strain>
        <strain>CN28</strain>
        <strain>CN29</strain>
        <strain>CN3</strain>
        <strain>CN43</strain>
        <strain>CN45</strain>
        <strain>CN46</strain>
        <strain>CN51</strain>
        <strain>LA108</strain>
        <strain>LA120</strain>
        <strain>LA128</strain>
        <strain>LA13</strain>
        <strain>LA15</strain>
        <strain>LA25</strain>
        <strain>LA3</strain>
        <strain>LA32</strain>
        <strain>LA34</strain>
        <strain>LA35</strain>
        <strain>LA4</strain>
        <strain>LA6</strain>
        <strain>LA9</strain>
        <strain>MA21</strain>
        <strain>MA24</strain>
        <strain>MA43</strain>
        <strain>MA74</strain>
        <strain>NC100b</strain>
        <strain>NC10b</strain>
        <strain>NC16a</strain>
        <strain>NC1b</strain>
        <strain>NC37a</strain>
        <strain>NC84a</strain>
        <strain>NC88a</strain>
        <strain>NC89a</strain>
        <strain>NC97a</strain>
    </source>
</reference>
<reference key="3">
    <citation type="journal article" date="2000" name="Science">
        <title>The genome sequence of Drosophila melanogaster.</title>
        <authorList>
            <person name="Adams M.D."/>
            <person name="Celniker S.E."/>
            <person name="Holt R.A."/>
            <person name="Evans C.A."/>
            <person name="Gocayne J.D."/>
            <person name="Amanatides P.G."/>
            <person name="Scherer S.E."/>
            <person name="Li P.W."/>
            <person name="Hoskins R.A."/>
            <person name="Galle R.F."/>
            <person name="George R.A."/>
            <person name="Lewis S.E."/>
            <person name="Richards S."/>
            <person name="Ashburner M."/>
            <person name="Henderson S.N."/>
            <person name="Sutton G.G."/>
            <person name="Wortman J.R."/>
            <person name="Yandell M.D."/>
            <person name="Zhang Q."/>
            <person name="Chen L.X."/>
            <person name="Brandon R.C."/>
            <person name="Rogers Y.-H.C."/>
            <person name="Blazej R.G."/>
            <person name="Champe M."/>
            <person name="Pfeiffer B.D."/>
            <person name="Wan K.H."/>
            <person name="Doyle C."/>
            <person name="Baxter E.G."/>
            <person name="Helt G."/>
            <person name="Nelson C.R."/>
            <person name="Miklos G.L.G."/>
            <person name="Abril J.F."/>
            <person name="Agbayani A."/>
            <person name="An H.-J."/>
            <person name="Andrews-Pfannkoch C."/>
            <person name="Baldwin D."/>
            <person name="Ballew R.M."/>
            <person name="Basu A."/>
            <person name="Baxendale J."/>
            <person name="Bayraktaroglu L."/>
            <person name="Beasley E.M."/>
            <person name="Beeson K.Y."/>
            <person name="Benos P.V."/>
            <person name="Berman B.P."/>
            <person name="Bhandari D."/>
            <person name="Bolshakov S."/>
            <person name="Borkova D."/>
            <person name="Botchan M.R."/>
            <person name="Bouck J."/>
            <person name="Brokstein P."/>
            <person name="Brottier P."/>
            <person name="Burtis K.C."/>
            <person name="Busam D.A."/>
            <person name="Butler H."/>
            <person name="Cadieu E."/>
            <person name="Center A."/>
            <person name="Chandra I."/>
            <person name="Cherry J.M."/>
            <person name="Cawley S."/>
            <person name="Dahlke C."/>
            <person name="Davenport L.B."/>
            <person name="Davies P."/>
            <person name="de Pablos B."/>
            <person name="Delcher A."/>
            <person name="Deng Z."/>
            <person name="Mays A.D."/>
            <person name="Dew I."/>
            <person name="Dietz S.M."/>
            <person name="Dodson K."/>
            <person name="Doup L.E."/>
            <person name="Downes M."/>
            <person name="Dugan-Rocha S."/>
            <person name="Dunkov B.C."/>
            <person name="Dunn P."/>
            <person name="Durbin K.J."/>
            <person name="Evangelista C.C."/>
            <person name="Ferraz C."/>
            <person name="Ferriera S."/>
            <person name="Fleischmann W."/>
            <person name="Fosler C."/>
            <person name="Gabrielian A.E."/>
            <person name="Garg N.S."/>
            <person name="Gelbart W.M."/>
            <person name="Glasser K."/>
            <person name="Glodek A."/>
            <person name="Gong F."/>
            <person name="Gorrell J.H."/>
            <person name="Gu Z."/>
            <person name="Guan P."/>
            <person name="Harris M."/>
            <person name="Harris N.L."/>
            <person name="Harvey D.A."/>
            <person name="Heiman T.J."/>
            <person name="Hernandez J.R."/>
            <person name="Houck J."/>
            <person name="Hostin D."/>
            <person name="Houston K.A."/>
            <person name="Howland T.J."/>
            <person name="Wei M.-H."/>
            <person name="Ibegwam C."/>
            <person name="Jalali M."/>
            <person name="Kalush F."/>
            <person name="Karpen G.H."/>
            <person name="Ke Z."/>
            <person name="Kennison J.A."/>
            <person name="Ketchum K.A."/>
            <person name="Kimmel B.E."/>
            <person name="Kodira C.D."/>
            <person name="Kraft C.L."/>
            <person name="Kravitz S."/>
            <person name="Kulp D."/>
            <person name="Lai Z."/>
            <person name="Lasko P."/>
            <person name="Lei Y."/>
            <person name="Levitsky A.A."/>
            <person name="Li J.H."/>
            <person name="Li Z."/>
            <person name="Liang Y."/>
            <person name="Lin X."/>
            <person name="Liu X."/>
            <person name="Mattei B."/>
            <person name="McIntosh T.C."/>
            <person name="McLeod M.P."/>
            <person name="McPherson D."/>
            <person name="Merkulov G."/>
            <person name="Milshina N.V."/>
            <person name="Mobarry C."/>
            <person name="Morris J."/>
            <person name="Moshrefi A."/>
            <person name="Mount S.M."/>
            <person name="Moy M."/>
            <person name="Murphy B."/>
            <person name="Murphy L."/>
            <person name="Muzny D.M."/>
            <person name="Nelson D.L."/>
            <person name="Nelson D.R."/>
            <person name="Nelson K.A."/>
            <person name="Nixon K."/>
            <person name="Nusskern D.R."/>
            <person name="Pacleb J.M."/>
            <person name="Palazzolo M."/>
            <person name="Pittman G.S."/>
            <person name="Pan S."/>
            <person name="Pollard J."/>
            <person name="Puri V."/>
            <person name="Reese M.G."/>
            <person name="Reinert K."/>
            <person name="Remington K."/>
            <person name="Saunders R.D.C."/>
            <person name="Scheeler F."/>
            <person name="Shen H."/>
            <person name="Shue B.C."/>
            <person name="Siden-Kiamos I."/>
            <person name="Simpson M."/>
            <person name="Skupski M.P."/>
            <person name="Smith T.J."/>
            <person name="Spier E."/>
            <person name="Spradling A.C."/>
            <person name="Stapleton M."/>
            <person name="Strong R."/>
            <person name="Sun E."/>
            <person name="Svirskas R."/>
            <person name="Tector C."/>
            <person name="Turner R."/>
            <person name="Venter E."/>
            <person name="Wang A.H."/>
            <person name="Wang X."/>
            <person name="Wang Z.-Y."/>
            <person name="Wassarman D.A."/>
            <person name="Weinstock G.M."/>
            <person name="Weissenbach J."/>
            <person name="Williams S.M."/>
            <person name="Woodage T."/>
            <person name="Worley K.C."/>
            <person name="Wu D."/>
            <person name="Yang S."/>
            <person name="Yao Q.A."/>
            <person name="Ye J."/>
            <person name="Yeh R.-F."/>
            <person name="Zaveri J.S."/>
            <person name="Zhan M."/>
            <person name="Zhang G."/>
            <person name="Zhao Q."/>
            <person name="Zheng L."/>
            <person name="Zheng X.H."/>
            <person name="Zhong F.N."/>
            <person name="Zhong W."/>
            <person name="Zhou X."/>
            <person name="Zhu S.C."/>
            <person name="Zhu X."/>
            <person name="Smith H.O."/>
            <person name="Gibbs R.A."/>
            <person name="Myers E.W."/>
            <person name="Rubin G.M."/>
            <person name="Venter J.C."/>
        </authorList>
    </citation>
    <scope>NUCLEOTIDE SEQUENCE [LARGE SCALE GENOMIC DNA]</scope>
    <source>
        <strain>Berkeley</strain>
    </source>
</reference>
<reference key="4">
    <citation type="journal article" date="2002" name="Genome Biol.">
        <title>Annotation of the Drosophila melanogaster euchromatic genome: a systematic review.</title>
        <authorList>
            <person name="Misra S."/>
            <person name="Crosby M.A."/>
            <person name="Mungall C.J."/>
            <person name="Matthews B.B."/>
            <person name="Campbell K.S."/>
            <person name="Hradecky P."/>
            <person name="Huang Y."/>
            <person name="Kaminker J.S."/>
            <person name="Millburn G.H."/>
            <person name="Prochnik S.E."/>
            <person name="Smith C.D."/>
            <person name="Tupy J.L."/>
            <person name="Whitfield E.J."/>
            <person name="Bayraktaroglu L."/>
            <person name="Berman B.P."/>
            <person name="Bettencourt B.R."/>
            <person name="Celniker S.E."/>
            <person name="de Grey A.D.N.J."/>
            <person name="Drysdale R.A."/>
            <person name="Harris N.L."/>
            <person name="Richter J."/>
            <person name="Russo S."/>
            <person name="Schroeder A.J."/>
            <person name="Shu S.Q."/>
            <person name="Stapleton M."/>
            <person name="Yamada C."/>
            <person name="Ashburner M."/>
            <person name="Gelbart W.M."/>
            <person name="Rubin G.M."/>
            <person name="Lewis S.E."/>
        </authorList>
    </citation>
    <scope>GENOME REANNOTATION</scope>
    <source>
        <strain>Berkeley</strain>
    </source>
</reference>
<reference key="5">
    <citation type="journal article" date="1999" name="Cell">
        <title>A spatial map of olfactory receptor expression in the Drosophila antenna.</title>
        <authorList>
            <person name="Vosshall L.B."/>
            <person name="Amrein H."/>
            <person name="Morozov P.S."/>
            <person name="Rzhetsky A."/>
            <person name="Axel R."/>
        </authorList>
    </citation>
    <scope>NUCLEOTIDE SEQUENCE [MRNA] OF 5-397</scope>
    <scope>TISSUE SPECIFICITY</scope>
    <source>
        <strain>Oregon-R</strain>
        <tissue>Antenna</tissue>
    </source>
</reference>
<reference key="6">
    <citation type="journal article" date="1999" name="Neuron">
        <title>A novel family of divergent seven-transmembrane proteins: candidate odorant receptors in Drosophila.</title>
        <authorList>
            <person name="Clyne P.J."/>
            <person name="Warr C.G."/>
            <person name="Freeman M.R."/>
            <person name="Lessing D."/>
            <person name="Kim J."/>
            <person name="Carlson J.R."/>
        </authorList>
    </citation>
    <scope>IDENTIFICATION</scope>
    <scope>TISSUE SPECIFICITY</scope>
    <source>
        <tissue>Antenna</tissue>
    </source>
</reference>
<reference key="7">
    <citation type="journal article" date="2000" name="Cell">
        <title>An olfactory sensory map in the fly brain.</title>
        <authorList>
            <person name="Vosshall L.B."/>
            <person name="Wong A.M."/>
            <person name="Axel R."/>
        </authorList>
    </citation>
    <scope>TISSUE SPECIFICITY</scope>
</reference>
<reference key="8">
    <citation type="journal article" date="2003" name="Neuron">
        <title>Integrating the molecular and cellular basis of odor coding in the Drosophila antenna.</title>
        <authorList>
            <person name="Dobritsa A.A."/>
            <person name="van der Goes van Naters W."/>
            <person name="Warr C.G."/>
            <person name="Steinbrecht R.A."/>
            <person name="Carlson J.R."/>
        </authorList>
    </citation>
    <scope>FUNCTION</scope>
    <scope>TISSUE SPECIFICITY</scope>
</reference>
<reference key="9">
    <citation type="journal article" date="2005" name="Nat. Neurosci.">
        <title>Odorant receptor heterodimerization in the olfactory system of Drosophila melanogaster.</title>
        <authorList>
            <person name="Neuhaus E.M."/>
            <person name="Gisselmann G."/>
            <person name="Zhang W."/>
            <person name="Dooley R."/>
            <person name="Stortkuhl K."/>
            <person name="Hatt H."/>
        </authorList>
    </citation>
    <scope>FUNCTION</scope>
    <scope>INTERACTION WITH ORCO</scope>
    <scope>TISSUE SPECIFICITY</scope>
</reference>
<reference key="10">
    <citation type="journal article" date="2006" name="Cell">
        <title>Coding of odors by a receptor repertoire.</title>
        <authorList>
            <person name="Hallem E.A."/>
            <person name="Carlson J.R."/>
        </authorList>
    </citation>
    <scope>FUNCTION</scope>
</reference>
<reference key="11">
    <citation type="journal article" date="2006" name="J. Neurobiol.">
        <title>The molecular receptive range of an olfactory receptor in vivo (Drosophila melanogaster Or22a).</title>
        <authorList>
            <person name="Pelz D."/>
            <person name="Roeske T."/>
            <person name="Syed Z."/>
            <person name="de Bruyne M."/>
            <person name="Galizia C.G."/>
        </authorList>
    </citation>
    <scope>FUNCTION</scope>
</reference>
<reference key="12">
    <citation type="journal article" date="2006" name="PLoS Biol.">
        <title>Atypical membrane topology and heteromeric function of Drosophila odorant receptors in vivo.</title>
        <authorList>
            <person name="Benton R."/>
            <person name="Sachse S."/>
            <person name="Michnick S.W."/>
            <person name="Vosshall L.B."/>
        </authorList>
    </citation>
    <scope>FUNCTION</scope>
    <scope>INTERACTION WITH ORCO</scope>
    <scope>TISSUE SPECIFICITY</scope>
</reference>
<reference key="13">
    <citation type="journal article" date="2007" name="J. Neurosci. Methods">
        <title>Functional analysis of a Drosophila melanogaster olfactory receptor expressed in Sf9 cells.</title>
        <authorList>
            <person name="Kiely A."/>
            <person name="Authier A."/>
            <person name="Kralicek A.V."/>
            <person name="Warr C.G."/>
            <person name="Newcomb R.D."/>
        </authorList>
    </citation>
    <scope>FUNCTION</scope>
</reference>
<reference key="14">
    <citation type="journal article" date="2008" name="Nature">
        <title>Drosophila odorant receptors are both ligand-gated and cyclic-nucleotide-activated cation channels.</title>
        <authorList>
            <person name="Wicher D."/>
            <person name="Schaefer R."/>
            <person name="Bauernfeind R."/>
            <person name="Stensmyr M.C."/>
            <person name="Heller R."/>
            <person name="Heinemann S.H."/>
            <person name="Hansson B.S."/>
        </authorList>
    </citation>
    <scope>FUNCTION</scope>
    <scope>INTERACTION WITH ORCO</scope>
</reference>
<reference key="15">
    <citation type="journal article" date="2012" name="Chem. Senses">
        <title>Genetic variation in odorant receptors contributes to variation in olfactory behavior in a natural population of Drosophila melanogaster.</title>
        <authorList>
            <person name="Richgels P.K."/>
            <person name="Rollmann S.M."/>
        </authorList>
    </citation>
    <scope>FUNCTION</scope>
</reference>
<reference key="16">
    <citation type="journal article" date="2013" name="Chem. Senses">
        <title>Weaker ligands can dominate an odor blend due to syntopic interactions.</title>
        <authorList>
            <person name="Munch D."/>
            <person name="Schmeichel B."/>
            <person name="Silbering A.F."/>
            <person name="Galizia C.G."/>
        </authorList>
    </citation>
    <scope>FUNCTION</scope>
</reference>
<reference key="17">
    <citation type="journal article" date="2013" name="Insect Biochem. Mol. Biol.">
        <title>Insights into subunit interactions within the insect olfactory receptor complex using FRET.</title>
        <authorList>
            <person name="German P.F."/>
            <person name="van der Poel S."/>
            <person name="Carraher C."/>
            <person name="Kralicek A.V."/>
            <person name="Newcomb R.D."/>
        </authorList>
    </citation>
    <scope>INTERACTION WITH ORCO AND SNMP1</scope>
    <scope>SUBCELLULAR LOCATION</scope>
</reference>
<organism>
    <name type="scientific">Drosophila melanogaster</name>
    <name type="common">Fruit fly</name>
    <dbReference type="NCBI Taxonomy" id="7227"/>
    <lineage>
        <taxon>Eukaryota</taxon>
        <taxon>Metazoa</taxon>
        <taxon>Ecdysozoa</taxon>
        <taxon>Arthropoda</taxon>
        <taxon>Hexapoda</taxon>
        <taxon>Insecta</taxon>
        <taxon>Pterygota</taxon>
        <taxon>Neoptera</taxon>
        <taxon>Endopterygota</taxon>
        <taxon>Diptera</taxon>
        <taxon>Brachycera</taxon>
        <taxon>Muscomorpha</taxon>
        <taxon>Ephydroidea</taxon>
        <taxon>Drosophilidae</taxon>
        <taxon>Drosophila</taxon>
        <taxon>Sophophora</taxon>
    </lineage>
</organism>
<dbReference type="EMBL" id="FM212142">
    <property type="protein sequence ID" value="CAR79041.1"/>
    <property type="molecule type" value="Genomic_DNA"/>
</dbReference>
<dbReference type="EMBL" id="FM212143">
    <property type="protein sequence ID" value="CAR79043.1"/>
    <property type="molecule type" value="Genomic_DNA"/>
</dbReference>
<dbReference type="EMBL" id="FM212144">
    <property type="protein sequence ID" value="CAR79045.1"/>
    <property type="molecule type" value="Genomic_DNA"/>
</dbReference>
<dbReference type="EMBL" id="FM212145">
    <property type="protein sequence ID" value="CAR79047.1"/>
    <property type="molecule type" value="Genomic_DNA"/>
</dbReference>
<dbReference type="EMBL" id="FM212146">
    <property type="protein sequence ID" value="CAR79049.1"/>
    <property type="molecule type" value="Genomic_DNA"/>
</dbReference>
<dbReference type="EMBL" id="FM212147">
    <property type="protein sequence ID" value="CAR79051.1"/>
    <property type="molecule type" value="Genomic_DNA"/>
</dbReference>
<dbReference type="EMBL" id="FM212148">
    <property type="protein sequence ID" value="CAR79053.1"/>
    <property type="molecule type" value="Genomic_DNA"/>
</dbReference>
<dbReference type="EMBL" id="FM212149">
    <property type="protein sequence ID" value="CAR79055.1"/>
    <property type="molecule type" value="Genomic_DNA"/>
</dbReference>
<dbReference type="EMBL" id="FM212150">
    <property type="protein sequence ID" value="CAR79057.1"/>
    <property type="molecule type" value="Genomic_DNA"/>
</dbReference>
<dbReference type="EMBL" id="FM212151">
    <property type="protein sequence ID" value="CAR79059.1"/>
    <property type="molecule type" value="Genomic_DNA"/>
</dbReference>
<dbReference type="EMBL" id="FM212152">
    <property type="protein sequence ID" value="CAR79061.1"/>
    <property type="molecule type" value="Genomic_DNA"/>
</dbReference>
<dbReference type="EMBL" id="FM212153">
    <property type="protein sequence ID" value="CAR79063.1"/>
    <property type="molecule type" value="Genomic_DNA"/>
</dbReference>
<dbReference type="EMBL" id="FM212154">
    <property type="protein sequence ID" value="CAR79065.1"/>
    <property type="molecule type" value="Genomic_DNA"/>
</dbReference>
<dbReference type="EMBL" id="FM212155">
    <property type="protein sequence ID" value="CAR79067.1"/>
    <property type="molecule type" value="Genomic_DNA"/>
</dbReference>
<dbReference type="EMBL" id="FM212156">
    <property type="protein sequence ID" value="CAR79069.1"/>
    <property type="molecule type" value="Genomic_DNA"/>
</dbReference>
<dbReference type="EMBL" id="FM212157">
    <property type="protein sequence ID" value="CAR79071.1"/>
    <property type="molecule type" value="Genomic_DNA"/>
</dbReference>
<dbReference type="EMBL" id="FM212158">
    <property type="protein sequence ID" value="CAR79073.1"/>
    <property type="molecule type" value="Genomic_DNA"/>
</dbReference>
<dbReference type="EMBL" id="FM212159">
    <property type="protein sequence ID" value="CAR79075.1"/>
    <property type="molecule type" value="Genomic_DNA"/>
</dbReference>
<dbReference type="EMBL" id="FM212160">
    <property type="protein sequence ID" value="CAR79077.1"/>
    <property type="molecule type" value="Genomic_DNA"/>
</dbReference>
<dbReference type="EMBL" id="FM212161">
    <property type="protein sequence ID" value="CAR79079.1"/>
    <property type="molecule type" value="Genomic_DNA"/>
</dbReference>
<dbReference type="EMBL" id="FM212162">
    <property type="protein sequence ID" value="CAR79081.1"/>
    <property type="molecule type" value="Genomic_DNA"/>
</dbReference>
<dbReference type="EMBL" id="FM212163">
    <property type="protein sequence ID" value="CAR79083.1"/>
    <property type="molecule type" value="Genomic_DNA"/>
</dbReference>
<dbReference type="EMBL" id="FM212164">
    <property type="protein sequence ID" value="CAR79085.1"/>
    <property type="molecule type" value="Genomic_DNA"/>
</dbReference>
<dbReference type="EMBL" id="FM212165">
    <property type="protein sequence ID" value="CAR79087.1"/>
    <property type="molecule type" value="Genomic_DNA"/>
</dbReference>
<dbReference type="EMBL" id="FM212166">
    <property type="protein sequence ID" value="CAR79089.1"/>
    <property type="molecule type" value="Genomic_DNA"/>
</dbReference>
<dbReference type="EMBL" id="FM212167">
    <property type="protein sequence ID" value="CAR79091.1"/>
    <property type="molecule type" value="Genomic_DNA"/>
</dbReference>
<dbReference type="EMBL" id="FM212168">
    <property type="protein sequence ID" value="CAR79093.1"/>
    <property type="molecule type" value="Genomic_DNA"/>
</dbReference>
<dbReference type="EMBL" id="FM212169">
    <property type="protein sequence ID" value="CAR79095.1"/>
    <property type="molecule type" value="Genomic_DNA"/>
</dbReference>
<dbReference type="EMBL" id="FM212170">
    <property type="protein sequence ID" value="CAR79097.1"/>
    <property type="molecule type" value="Genomic_DNA"/>
</dbReference>
<dbReference type="EMBL" id="FM212171">
    <property type="protein sequence ID" value="CAR79099.1"/>
    <property type="molecule type" value="Genomic_DNA"/>
</dbReference>
<dbReference type="EMBL" id="FM212172">
    <property type="protein sequence ID" value="CAR79101.1"/>
    <property type="molecule type" value="Genomic_DNA"/>
</dbReference>
<dbReference type="EMBL" id="FM212173">
    <property type="protein sequence ID" value="CAR79103.1"/>
    <property type="molecule type" value="Genomic_DNA"/>
</dbReference>
<dbReference type="EMBL" id="FM212174">
    <property type="protein sequence ID" value="CAR79105.1"/>
    <property type="molecule type" value="Genomic_DNA"/>
</dbReference>
<dbReference type="EMBL" id="FM212175">
    <property type="protein sequence ID" value="CAR79107.1"/>
    <property type="molecule type" value="Genomic_DNA"/>
</dbReference>
<dbReference type="EMBL" id="FM212176">
    <property type="protein sequence ID" value="CAR79109.1"/>
    <property type="molecule type" value="Genomic_DNA"/>
</dbReference>
<dbReference type="EMBL" id="FM212177">
    <property type="protein sequence ID" value="CAR79111.1"/>
    <property type="molecule type" value="Genomic_DNA"/>
</dbReference>
<dbReference type="EMBL" id="FM212178">
    <property type="protein sequence ID" value="CAR79113.1"/>
    <property type="molecule type" value="Genomic_DNA"/>
</dbReference>
<dbReference type="EMBL" id="FM212204">
    <property type="protein sequence ID" value="CAR79364.1"/>
    <property type="molecule type" value="Genomic_DNA"/>
</dbReference>
<dbReference type="EMBL" id="AE014134">
    <property type="protein sequence ID" value="AAF51364.1"/>
    <property type="molecule type" value="Genomic_DNA"/>
</dbReference>
<dbReference type="EMBL" id="AF127923">
    <property type="protein sequence ID" value="AAD26358.2"/>
    <property type="molecule type" value="mRNA"/>
</dbReference>
<dbReference type="RefSeq" id="NP_523453.1">
    <property type="nucleotide sequence ID" value="NM_078729.3"/>
</dbReference>
<dbReference type="SMR" id="P81909"/>
<dbReference type="BioGRID" id="59579">
    <property type="interactions" value="5"/>
</dbReference>
<dbReference type="DIP" id="DIP-20484N"/>
<dbReference type="FunCoup" id="P81909">
    <property type="interactions" value="22"/>
</dbReference>
<dbReference type="IntAct" id="P81909">
    <property type="interactions" value="3"/>
</dbReference>
<dbReference type="STRING" id="7227.FBpp0077541"/>
<dbReference type="TCDB" id="1.A.69.1.1">
    <property type="family name" value="the heteromeric odorant receptor channel (horc) family"/>
</dbReference>
<dbReference type="PaxDb" id="7227-FBpp0077541"/>
<dbReference type="EnsemblMetazoa" id="FBtr0077873">
    <property type="protein sequence ID" value="FBpp0077541"/>
    <property type="gene ID" value="FBgn0026398"/>
</dbReference>
<dbReference type="GeneID" id="33335"/>
<dbReference type="KEGG" id="dme:Dmel_CG12193"/>
<dbReference type="AGR" id="FB:FBgn0026398"/>
<dbReference type="CTD" id="33335"/>
<dbReference type="FlyBase" id="FBgn0026398">
    <property type="gene designation" value="Or22a"/>
</dbReference>
<dbReference type="VEuPathDB" id="VectorBase:FBgn0026398"/>
<dbReference type="eggNOG" id="ENOG502R7K0">
    <property type="taxonomic scope" value="Eukaryota"/>
</dbReference>
<dbReference type="GeneTree" id="ENSGT00540000073151"/>
<dbReference type="HOGENOM" id="CLU_033399_8_0_1"/>
<dbReference type="InParanoid" id="P81909"/>
<dbReference type="OMA" id="MARCHIC"/>
<dbReference type="OrthoDB" id="6604226at2759"/>
<dbReference type="PhylomeDB" id="P81909"/>
<dbReference type="BioGRID-ORCS" id="33335">
    <property type="hits" value="0 hits in 1 CRISPR screen"/>
</dbReference>
<dbReference type="GenomeRNAi" id="33335"/>
<dbReference type="PRO" id="PR:P81909"/>
<dbReference type="Proteomes" id="UP000000803">
    <property type="component" value="Chromosome 2L"/>
</dbReference>
<dbReference type="Bgee" id="FBgn0026398">
    <property type="expression patterns" value="Expressed in antennal olfactory receptor neuron of basiconic sensillum in antenna and 2 other cell types or tissues"/>
</dbReference>
<dbReference type="ExpressionAtlas" id="P81909">
    <property type="expression patterns" value="baseline and differential"/>
</dbReference>
<dbReference type="GO" id="GO:0030425">
    <property type="term" value="C:dendrite"/>
    <property type="evidence" value="ECO:0000314"/>
    <property type="project" value="FlyBase"/>
</dbReference>
<dbReference type="GO" id="GO:0032590">
    <property type="term" value="C:dendrite membrane"/>
    <property type="evidence" value="ECO:0000314"/>
    <property type="project" value="FlyBase"/>
</dbReference>
<dbReference type="GO" id="GO:0016020">
    <property type="term" value="C:membrane"/>
    <property type="evidence" value="ECO:0000303"/>
    <property type="project" value="UniProtKB"/>
</dbReference>
<dbReference type="GO" id="GO:0005886">
    <property type="term" value="C:plasma membrane"/>
    <property type="evidence" value="ECO:0007005"/>
    <property type="project" value="FlyBase"/>
</dbReference>
<dbReference type="GO" id="GO:0071683">
    <property type="term" value="C:sensory dendrite"/>
    <property type="evidence" value="ECO:0000314"/>
    <property type="project" value="FlyBase"/>
</dbReference>
<dbReference type="GO" id="GO:0170020">
    <property type="term" value="F:ionotropic olfactory receptor activity"/>
    <property type="evidence" value="ECO:0000314"/>
    <property type="project" value="FlyBase"/>
</dbReference>
<dbReference type="GO" id="GO:0099094">
    <property type="term" value="F:ligand-gated monoatomic cation channel activity"/>
    <property type="evidence" value="ECO:0000314"/>
    <property type="project" value="FlyBase"/>
</dbReference>
<dbReference type="GO" id="GO:0005549">
    <property type="term" value="F:odorant binding"/>
    <property type="evidence" value="ECO:0000250"/>
    <property type="project" value="FlyBase"/>
</dbReference>
<dbReference type="GO" id="GO:0004984">
    <property type="term" value="F:olfactory receptor activity"/>
    <property type="evidence" value="ECO:0000318"/>
    <property type="project" value="GO_Central"/>
</dbReference>
<dbReference type="GO" id="GO:0050911">
    <property type="term" value="P:detection of chemical stimulus involved in sensory perception of smell"/>
    <property type="evidence" value="ECO:0007005"/>
    <property type="project" value="FlyBase"/>
</dbReference>
<dbReference type="GO" id="GO:0098655">
    <property type="term" value="P:monoatomic cation transmembrane transport"/>
    <property type="evidence" value="ECO:0000314"/>
    <property type="project" value="FlyBase"/>
</dbReference>
<dbReference type="GO" id="GO:0042048">
    <property type="term" value="P:olfactory behavior"/>
    <property type="evidence" value="ECO:0000315"/>
    <property type="project" value="FlyBase"/>
</dbReference>
<dbReference type="GO" id="GO:0007608">
    <property type="term" value="P:sensory perception of smell"/>
    <property type="evidence" value="ECO:0000315"/>
    <property type="project" value="FlyBase"/>
</dbReference>
<dbReference type="GO" id="GO:0007165">
    <property type="term" value="P:signal transduction"/>
    <property type="evidence" value="ECO:0007669"/>
    <property type="project" value="UniProtKB-KW"/>
</dbReference>
<dbReference type="InterPro" id="IPR004117">
    <property type="entry name" value="7tm6_olfct_rcpt"/>
</dbReference>
<dbReference type="PANTHER" id="PTHR21137">
    <property type="entry name" value="ODORANT RECEPTOR"/>
    <property type="match status" value="1"/>
</dbReference>
<dbReference type="PANTHER" id="PTHR21137:SF35">
    <property type="entry name" value="ODORANT RECEPTOR 19A-RELATED"/>
    <property type="match status" value="1"/>
</dbReference>
<dbReference type="Pfam" id="PF02949">
    <property type="entry name" value="7tm_6"/>
    <property type="match status" value="1"/>
</dbReference>
<name>OR22A_DROME</name>
<evidence type="ECO:0000255" key="1"/>
<evidence type="ECO:0000269" key="2">
    <source>
    </source>
</evidence>
<evidence type="ECO:0000269" key="3">
    <source>
    </source>
</evidence>
<evidence type="ECO:0000269" key="4">
    <source>
    </source>
</evidence>
<evidence type="ECO:0000269" key="5">
    <source>
    </source>
</evidence>
<evidence type="ECO:0000269" key="6">
    <source>
    </source>
</evidence>
<evidence type="ECO:0000269" key="7">
    <source>
    </source>
</evidence>
<evidence type="ECO:0000269" key="8">
    <source>
    </source>
</evidence>
<evidence type="ECO:0000269" key="9">
    <source>
    </source>
</evidence>
<evidence type="ECO:0000269" key="10">
    <source>
    </source>
</evidence>
<evidence type="ECO:0000269" key="11">
    <source>
    </source>
</evidence>
<evidence type="ECO:0000269" key="12">
    <source>
    </source>
</evidence>
<evidence type="ECO:0000269" key="13">
    <source>
    </source>
</evidence>
<evidence type="ECO:0000269" key="14">
    <source>
    </source>
</evidence>
<evidence type="ECO:0000269" key="15">
    <source>
    </source>
</evidence>
<evidence type="ECO:0000269" key="16">
    <source>
    </source>
</evidence>
<evidence type="ECO:0000305" key="17"/>
<keyword id="KW-1003">Cell membrane</keyword>
<keyword id="KW-0472">Membrane</keyword>
<keyword id="KW-0552">Olfaction</keyword>
<keyword id="KW-0675">Receptor</keyword>
<keyword id="KW-1185">Reference proteome</keyword>
<keyword id="KW-0716">Sensory transduction</keyword>
<keyword id="KW-0807">Transducer</keyword>
<keyword id="KW-0812">Transmembrane</keyword>
<keyword id="KW-1133">Transmembrane helix</keyword>
<protein>
    <recommendedName>
        <fullName>Odorant receptor 22a</fullName>
    </recommendedName>
</protein>
<sequence length="397" mass="46754">MLSKFFPHIKEKPLSERVKSRDAFIYLDRVMWSFGWTEPENKRWILPYKLWLAFVNIVMLILLPISISIEYLHRFKTFSAGEFLSSLEIGVNMYGSSFKCAFTLIGFKKRQEAKVLLDQLDKRCLSDKERSTVHRYVAMGNFFDILYHIFYSTFVVMNFPYFLLERRHAWRMYFPYIDSDEQFYISSIAECFLMTEAIYMDLCTDVCPLISMLMARCHISLLKQRLRNLRSKPGRTEDEYLEELTECIRDHRLLLDYVDALRPVFSGTIFVQFLLIGTVLGLSMINLMFFSTFWTGVATCLFMFDVSMETFPFCYLCNMIIDDCQEMSNCLFQSDWTSADRRYKSTLVYFLHNLQQPITLTAGGVFPISMQTNLAMVKLAFSVVTVIKQFNLAERFQ</sequence>